<geneLocation type="plasmid">
    <name>ColE1</name>
</geneLocation>
<name>MBEA_ECOLX</name>
<organism>
    <name type="scientific">Escherichia coli</name>
    <dbReference type="NCBI Taxonomy" id="562"/>
    <lineage>
        <taxon>Bacteria</taxon>
        <taxon>Pseudomonadati</taxon>
        <taxon>Pseudomonadota</taxon>
        <taxon>Gammaproteobacteria</taxon>
        <taxon>Enterobacterales</taxon>
        <taxon>Enterobacteriaceae</taxon>
        <taxon>Escherichia</taxon>
    </lineage>
</organism>
<feature type="chain" id="PRO_0000068400" description="DNA relaxase MbeA">
    <location>
        <begin position="1"/>
        <end position="517"/>
    </location>
</feature>
<feature type="region of interest" description="Disordered" evidence="1">
    <location>
        <begin position="281"/>
        <end position="310"/>
    </location>
</feature>
<feature type="region of interest" description="Disordered" evidence="1">
    <location>
        <begin position="380"/>
        <end position="405"/>
    </location>
</feature>
<feature type="region of interest" description="Disordered" evidence="1">
    <location>
        <begin position="496"/>
        <end position="517"/>
    </location>
</feature>
<feature type="compositionally biased region" description="Basic and acidic residues" evidence="1">
    <location>
        <begin position="297"/>
        <end position="310"/>
    </location>
</feature>
<feature type="compositionally biased region" description="Basic and acidic residues" evidence="1">
    <location>
        <begin position="496"/>
        <end position="510"/>
    </location>
</feature>
<feature type="active site" description="O-(5'-phospho-DNA)-tyrosine intermediate">
    <location>
        <position position="19"/>
    </location>
</feature>
<feature type="binding site" evidence="3">
    <location>
        <position position="97"/>
    </location>
    <ligand>
        <name>a divalent metal cation</name>
        <dbReference type="ChEBI" id="CHEBI:60240"/>
    </ligand>
</feature>
<feature type="binding site" evidence="3">
    <location>
        <position position="104"/>
    </location>
    <ligand>
        <name>a divalent metal cation</name>
        <dbReference type="ChEBI" id="CHEBI:60240"/>
    </ligand>
</feature>
<feature type="binding site" evidence="3">
    <location>
        <position position="106"/>
    </location>
    <ligand>
        <name>a divalent metal cation</name>
        <dbReference type="ChEBI" id="CHEBI:60240"/>
    </ligand>
</feature>
<feature type="mutagenesis site" description="Loss of in vitro DNA-cleavage activity and in vivo functionality." evidence="2">
    <original>Y</original>
    <variation>A</variation>
    <location>
        <position position="19"/>
    </location>
</feature>
<feature type="mutagenesis site" description="Loss of in vitro DNA-cleavage activity and in vivo functionality. No effect on DNA binding around the nic site." evidence="2">
    <original>H</original>
    <variation>A</variation>
    <location>
        <position position="97"/>
    </location>
</feature>
<feature type="mutagenesis site" description="Loss of in vitro DNA-cleavage activity and in vivo functionality. No effect on DNA binding around the nic site." evidence="2">
    <original>E</original>
    <variation>A</variation>
    <location>
        <position position="104"/>
    </location>
</feature>
<feature type="mutagenesis site" description="Loss of the in vitro DNA-cleavage and strand-transfer activities but displays 1% of the in vivo wild-type activity; when associated with H-106." evidence="2">
    <original>E</original>
    <variation>H</variation>
    <location>
        <position position="104"/>
    </location>
</feature>
<feature type="mutagenesis site" description="4-fold and 3-fold reduction in the in vitro DNA-cleavage and strand-transfer activities, respectively, but no reduction in the in vivo functionality." evidence="2">
    <original>N</original>
    <variation>A</variation>
    <location>
        <position position="106"/>
    </location>
</feature>
<feature type="mutagenesis site" description="Loss of the in vitro DNA-cleavage and strand-transfer activities but displays 1% of the in vivo wild-type activity; when associated with H-104." evidence="2">
    <original>N</original>
    <variation>H</variation>
    <location>
        <position position="106"/>
    </location>
</feature>
<proteinExistence type="evidence at protein level"/>
<dbReference type="EC" id="5.6.2.1"/>
<dbReference type="EMBL" id="X15873">
    <property type="protein sequence ID" value="CAA33883.1"/>
    <property type="molecule type" value="Genomic_DNA"/>
</dbReference>
<dbReference type="PIR" id="JQ0390">
    <property type="entry name" value="JQ0390"/>
</dbReference>
<dbReference type="SMR" id="P13658"/>
<dbReference type="IntAct" id="P13658">
    <property type="interactions" value="1"/>
</dbReference>
<dbReference type="MINT" id="P13658"/>
<dbReference type="GO" id="GO:0003677">
    <property type="term" value="F:DNA binding"/>
    <property type="evidence" value="ECO:0007669"/>
    <property type="project" value="UniProtKB-KW"/>
</dbReference>
<dbReference type="GO" id="GO:0003917">
    <property type="term" value="F:DNA topoisomerase type I (single strand cut, ATP-independent) activity"/>
    <property type="evidence" value="ECO:0007669"/>
    <property type="project" value="UniProtKB-EC"/>
</dbReference>
<dbReference type="GO" id="GO:0046872">
    <property type="term" value="F:metal ion binding"/>
    <property type="evidence" value="ECO:0007669"/>
    <property type="project" value="UniProtKB-KW"/>
</dbReference>
<dbReference type="InterPro" id="IPR005094">
    <property type="entry name" value="Endonuclease_MobA/VirD2"/>
</dbReference>
<dbReference type="NCBIfam" id="NF047848">
    <property type="entry name" value="relax_MbeA_E1"/>
    <property type="match status" value="1"/>
</dbReference>
<dbReference type="Pfam" id="PF03432">
    <property type="entry name" value="Relaxase"/>
    <property type="match status" value="1"/>
</dbReference>
<gene>
    <name type="primary">mbeA</name>
</gene>
<keyword id="KW-0170">Cobalt</keyword>
<keyword id="KW-0184">Conjugation</keyword>
<keyword id="KW-0238">DNA-binding</keyword>
<keyword id="KW-0413">Isomerase</keyword>
<keyword id="KW-0460">Magnesium</keyword>
<keyword id="KW-0479">Metal-binding</keyword>
<keyword id="KW-0499">Mobility protein</keyword>
<keyword id="KW-0533">Nickel</keyword>
<keyword id="KW-0614">Plasmid</keyword>
<keyword id="KW-0799">Topoisomerase</keyword>
<sequence>MIVKFHARGKGGGSGPVDYLLGRERNREGATVLQGNPEEVRELIDATPFAKKYTSGVLSFAEKELPPGGREKVMASFERVLMPGLEKNQYSILWVEHQDKGRLELNFVIPNMELQTGKRLQPYYDRADRPRIDAWQTLVNHHYGLHDPNAPENRRTLTLPDNLPETKQALAEGVTRGIDALYHAGEIKGRQDVIQALTEAGLEVVRVTRTSISIADPNGGKNIRLKGAFYEQSFADGRGVREKAERESRIYRENAEQRVQEARRICKRGCDIKRDENQRRYSPVHSLDRGIAGKTPGRGERGDDAAQEGRVKAGREYGHDVTGDSLSPVYREWRDALVSWREDTGEPGRNQEAGRDIAETEREDMGRGVCAGREQEIPCPSVREISGGDSLSGERVGTSEGVTQSDRAGNTFAERLRAAATGLYAAAERMGERLRGIAEDVFAYATGQRDAERAGHAVESAGAALERADRTLEPVIQRELEIREERLIQEREHVLSLERERQPEIQERTLDGPSLGW</sequence>
<reference key="1">
    <citation type="journal article" date="1989" name="Mol. Gen. Genet.">
        <title>Characterization of the ColE1 mobilization region and its protein products.</title>
        <authorList>
            <person name="Boyd A.C."/>
            <person name="Archer J.A.K."/>
            <person name="Sherratt D.J."/>
        </authorList>
    </citation>
    <scope>NUCLEOTIDE SEQUENCE [GENOMIC DNA]</scope>
</reference>
<reference key="2">
    <citation type="journal article" date="2003" name="Mol. Microbiol.">
        <title>Genetic and biochemical characterization of MbeA, the relaxase involved in plasmid ColE1 conjugative mobilization.</title>
        <authorList>
            <person name="Varsaki A."/>
            <person name="Lucas M."/>
            <person name="Afendra A.S."/>
            <person name="Drainas C."/>
            <person name="de la Cruz F."/>
        </authorList>
    </citation>
    <scope>FUNCTION AS A RELAXASE</scope>
    <scope>COFACTOR</scope>
    <scope>DETERMINATION OF THE NIC SITE</scope>
    <scope>MUTAGENESIS OF TYR-19; HIS-97; GLU-104 AND ASN-106</scope>
</reference>
<evidence type="ECO:0000256" key="1">
    <source>
        <dbReference type="SAM" id="MobiDB-lite"/>
    </source>
</evidence>
<evidence type="ECO:0000269" key="2">
    <source>
    </source>
</evidence>
<evidence type="ECO:0000305" key="3"/>
<protein>
    <recommendedName>
        <fullName>DNA relaxase MbeA</fullName>
        <ecNumber>5.6.2.1</ecNumber>
    </recommendedName>
    <alternativeName>
        <fullName>DNA nickase</fullName>
    </alternativeName>
    <alternativeName>
        <fullName>Mobilization protein MbeA</fullName>
    </alternativeName>
</protein>
<comment type="function">
    <text evidence="2">Relaxase involved in plasmid ColE1 conjugative mobilization and is thus essential to promote the specific transfer of the plasmid during conjugation. First catalyzes the specific cleavage of one of the DNA strands at oriT, forming a covalent 5'-phosphotyrosine intermediate. The nic site corresponds to 5'-(1469)CTGG/CTTA(1462)-3' in the cleaved strand. The cleaved strand is then transferred through the dedicated type IV secretion apparatus. MbeA remains covalently linked at the 5' end of the strand, and once in the recipient cell, it probably catalyzes the rejoining of the two ends of the strand, re-forming the circular plasmid DNA. Is functional in vitro without a requirement for the conjugative accessory proteins.</text>
</comment>
<comment type="catalytic activity">
    <reaction>
        <text>ATP-independent breakage of single-stranded DNA, followed by passage and rejoining.</text>
        <dbReference type="EC" id="5.6.2.1"/>
    </reaction>
</comment>
<comment type="cofactor">
    <cofactor evidence="2">
        <name>Mn(2+)</name>
        <dbReference type="ChEBI" id="CHEBI:29035"/>
    </cofactor>
    <cofactor evidence="2">
        <name>Co(2+)</name>
        <dbReference type="ChEBI" id="CHEBI:48828"/>
    </cofactor>
    <cofactor evidence="2">
        <name>Ni(2+)</name>
        <dbReference type="ChEBI" id="CHEBI:49786"/>
    </cofactor>
    <text evidence="2">Divalent metal cation. Can use Mg(2+), Co(2+) or Ni(2+) with similar efficiencies, but is not active in the presence of Mn(2+).</text>
</comment>
<comment type="subunit">
    <text>Interacts with MbeB and MbeC to form the relaxosome.</text>
</comment>
<comment type="interaction">
    <interactant intactId="EBI-7798346">
        <id>P13658</id>
    </interactant>
    <interactant intactId="EBI-7798318">
        <id>P13657</id>
        <label>mbeC</label>
    </interactant>
    <organismsDiffer>false</organismsDiffer>
    <experiments>2</experiments>
</comment>
<comment type="miscellaneous">
    <text>The 100 C-terminal amino acids are dispensable for activity.</text>
</comment>
<comment type="similarity">
    <text evidence="3">To E.coli MbaA and MbkA.</text>
</comment>
<accession>P13658</accession>